<sequence>MYRVKSESDCDMIHQEQMDSPVADDGSSGGSPHRGGGPPLKKGPWTSAEDAILVDYVKKHGEGNWNAVQKNTGLFRCGKSCRLRWANHLRPNLKKGAFTAEEERLIIQLHSKMGNKWARMAAHLPGRTDNEIKNYWNTRIKRCQRAGLPIYPTSVCNQSSNEDQQCSSDFDCGENLSNDLLNANGLYLPDFTCDNFIANSEALPYAPHLSAVSISNLLGQSFASKSCSFMDQVNQTGMLKQSDGVLPGLSDTINGVISSVDQFSNDSEKLKQAVGFDYLHEANSTSKIIAPFGGALNGSHAFLNGNFSASRPTSGPLKMELPSLQDTESDPNSWLKYTVAPALQPTELVDPYLQSPAATPSVKSECASPRNSGLLEELIHEAQTLRSGKNQQTSVISSSSSVGTPCNTTVLSPEFDMCQEYWEEQHPGPFLNDCAPFSGNSFTESTPPVSAASPDIFQLSKVSPAQSTSMGSGEQVMGPKYEPGDTSPHPENFRPDALFSGNTADPSVFNNAIAMLLGNDLSIDCRPVLGDGIMFNSSSWSNMPHACEMSEFK</sequence>
<dbReference type="EMBL" id="AP003247">
    <property type="protein sequence ID" value="BAB85242.1"/>
    <property type="molecule type" value="Genomic_DNA"/>
</dbReference>
<dbReference type="EMBL" id="AP003247">
    <property type="protein sequence ID" value="BAD68205.1"/>
    <property type="molecule type" value="Genomic_DNA"/>
</dbReference>
<dbReference type="EMBL" id="AP008207">
    <property type="protein sequence ID" value="BAF06506.1"/>
    <property type="molecule type" value="Genomic_DNA"/>
</dbReference>
<dbReference type="EMBL" id="AP014957">
    <property type="protein sequence ID" value="BAS74878.1"/>
    <property type="molecule type" value="Genomic_DNA"/>
</dbReference>
<dbReference type="EMBL" id="AP014957">
    <property type="protein sequence ID" value="BAS74879.1"/>
    <property type="molecule type" value="Genomic_DNA"/>
</dbReference>
<dbReference type="EMBL" id="CM000138">
    <property type="protein sequence ID" value="EAZ13907.1"/>
    <property type="molecule type" value="Genomic_DNA"/>
</dbReference>
<dbReference type="EMBL" id="AK063951">
    <property type="status" value="NOT_ANNOTATED_CDS"/>
    <property type="molecule type" value="mRNA"/>
</dbReference>
<dbReference type="EMBL" id="AK102841">
    <property type="protein sequence ID" value="BAG95742.1"/>
    <property type="molecule type" value="mRNA"/>
</dbReference>
<dbReference type="RefSeq" id="XP_015622335.1">
    <property type="nucleotide sequence ID" value="XM_015766849.1"/>
</dbReference>
<dbReference type="RefSeq" id="XP_015622336.1">
    <property type="nucleotide sequence ID" value="XM_015766850.1"/>
</dbReference>
<dbReference type="SMR" id="Q0JIC2"/>
<dbReference type="FunCoup" id="Q0JIC2">
    <property type="interactions" value="616"/>
</dbReference>
<dbReference type="STRING" id="39947.Q0JIC2"/>
<dbReference type="PaxDb" id="39947-Q0JIC2"/>
<dbReference type="EnsemblPlants" id="Os01t0812000-01">
    <molecule id="Q0JIC2-1"/>
    <property type="protein sequence ID" value="Os01t0812000-01"/>
    <property type="gene ID" value="Os01g0812000"/>
</dbReference>
<dbReference type="EnsemblPlants" id="Os01t0812000-02">
    <molecule id="Q0JIC2-1"/>
    <property type="protein sequence ID" value="Os01t0812000-02"/>
    <property type="gene ID" value="Os01g0812000"/>
</dbReference>
<dbReference type="Gramene" id="Os01t0812000-01">
    <molecule id="Q0JIC2-1"/>
    <property type="protein sequence ID" value="Os01t0812000-01"/>
    <property type="gene ID" value="Os01g0812000"/>
</dbReference>
<dbReference type="Gramene" id="Os01t0812000-02">
    <molecule id="Q0JIC2-1"/>
    <property type="protein sequence ID" value="Os01t0812000-02"/>
    <property type="gene ID" value="Os01g0812000"/>
</dbReference>
<dbReference type="KEGG" id="dosa:Os01g0812000"/>
<dbReference type="eggNOG" id="KOG0048">
    <property type="taxonomic scope" value="Eukaryota"/>
</dbReference>
<dbReference type="InParanoid" id="Q0JIC2"/>
<dbReference type="OMA" id="WHELYSE"/>
<dbReference type="OrthoDB" id="2143914at2759"/>
<dbReference type="PlantReactome" id="R-OSA-9608575">
    <property type="pathway name" value="Reproductive meristem phase change"/>
</dbReference>
<dbReference type="Proteomes" id="UP000000763">
    <property type="component" value="Chromosome 1"/>
</dbReference>
<dbReference type="Proteomes" id="UP000007752">
    <property type="component" value="Chromosome 1"/>
</dbReference>
<dbReference type="Proteomes" id="UP000059680">
    <property type="component" value="Chromosome 1"/>
</dbReference>
<dbReference type="ExpressionAtlas" id="Q0JIC2">
    <property type="expression patterns" value="baseline and differential"/>
</dbReference>
<dbReference type="GO" id="GO:0005634">
    <property type="term" value="C:nucleus"/>
    <property type="evidence" value="ECO:0007669"/>
    <property type="project" value="UniProtKB-SubCell"/>
</dbReference>
<dbReference type="GO" id="GO:0003677">
    <property type="term" value="F:DNA binding"/>
    <property type="evidence" value="ECO:0007669"/>
    <property type="project" value="UniProtKB-KW"/>
</dbReference>
<dbReference type="GO" id="GO:0048653">
    <property type="term" value="P:anther development"/>
    <property type="evidence" value="ECO:0000315"/>
    <property type="project" value="UniProtKB"/>
</dbReference>
<dbReference type="GO" id="GO:0030154">
    <property type="term" value="P:cell differentiation"/>
    <property type="evidence" value="ECO:0007669"/>
    <property type="project" value="UniProtKB-KW"/>
</dbReference>
<dbReference type="GO" id="GO:0009555">
    <property type="term" value="P:pollen development"/>
    <property type="evidence" value="ECO:0000315"/>
    <property type="project" value="UniProtKB"/>
</dbReference>
<dbReference type="GO" id="GO:0006355">
    <property type="term" value="P:regulation of DNA-templated transcription"/>
    <property type="evidence" value="ECO:0007669"/>
    <property type="project" value="InterPro"/>
</dbReference>
<dbReference type="CDD" id="cd00167">
    <property type="entry name" value="SANT"/>
    <property type="match status" value="2"/>
</dbReference>
<dbReference type="FunFam" id="1.10.10.60:FF:000001">
    <property type="entry name" value="MYB-related transcription factor"/>
    <property type="match status" value="1"/>
</dbReference>
<dbReference type="FunFam" id="1.10.10.60:FF:000119">
    <property type="entry name" value="Transcription factor GAMYB"/>
    <property type="match status" value="1"/>
</dbReference>
<dbReference type="Gene3D" id="1.10.10.60">
    <property type="entry name" value="Homeodomain-like"/>
    <property type="match status" value="2"/>
</dbReference>
<dbReference type="InterPro" id="IPR016310">
    <property type="entry name" value="GAMYB-like"/>
</dbReference>
<dbReference type="InterPro" id="IPR009057">
    <property type="entry name" value="Homeodomain-like_sf"/>
</dbReference>
<dbReference type="InterPro" id="IPR017930">
    <property type="entry name" value="Myb_dom"/>
</dbReference>
<dbReference type="InterPro" id="IPR001005">
    <property type="entry name" value="SANT/Myb"/>
</dbReference>
<dbReference type="PANTHER" id="PTHR47995">
    <property type="entry name" value="TRANSCRIPTION FACTOR MYB33-RELATED"/>
    <property type="match status" value="1"/>
</dbReference>
<dbReference type="PANTHER" id="PTHR47995:SF18">
    <property type="entry name" value="TRANSCRIPTION FACTOR MYB65"/>
    <property type="match status" value="1"/>
</dbReference>
<dbReference type="Pfam" id="PF00249">
    <property type="entry name" value="Myb_DNA-binding"/>
    <property type="match status" value="2"/>
</dbReference>
<dbReference type="PIRSF" id="PIRSF001693">
    <property type="entry name" value="Transcription_factor_GAMYB"/>
    <property type="match status" value="1"/>
</dbReference>
<dbReference type="SMART" id="SM00717">
    <property type="entry name" value="SANT"/>
    <property type="match status" value="2"/>
</dbReference>
<dbReference type="SUPFAM" id="SSF46689">
    <property type="entry name" value="Homeodomain-like"/>
    <property type="match status" value="1"/>
</dbReference>
<dbReference type="PROSITE" id="PS51294">
    <property type="entry name" value="HTH_MYB"/>
    <property type="match status" value="2"/>
</dbReference>
<protein>
    <recommendedName>
        <fullName>Transcription factor GAMYB</fullName>
    </recommendedName>
    <alternativeName>
        <fullName>OsGAMyb</fullName>
    </alternativeName>
</protein>
<comment type="function">
    <text evidence="3 4 5 6">Transcriptional activator of gibberellin-dependent alpha-amylase expression in aleurone cells. Involved in pollen and floral organs development. May bind to the 5'-TAACAAA-3' box of alpha-amylase promoter. Required for anther development (PubMed:19454733, PubMed:20590996). Functions in parallel with UDT1 to regulate early anther development. Functions upstream of the transcription factor TDR and may positively regulate its transcription (PubMed:20590996). Required for pollen development. Probably required for controlling tapetal cell size and promoting tapetal programmed cell death (PCD) during anther development. Required for exine and Ubisch body formation in anthers. Interacts with the DNA specific motifs of giberrellin-up-regulated genes of anthers and regulates their expression. Positively regulates the expression of the laurate hydroxylase CYP703A3, known to be essential for the development of pollen exine and anther epicuticular layer (PubMed:19454733). Functions with MYBS1 to integrate diverse nutrient starvation and gibberellin (GA) signaling pathways during germination of grains. Sugar, nitrogen and phosphate starvation signals converge and interconnect with GA to promote the co-nuclear import of GAMYB and MYBS1, resulting in the expression of a large set of GA-inducible hydrolases, transporters and regulators that are essential for mobilization of nutrient reserves in the endosperm to support seedling growth (PubMed:22773748).</text>
</comment>
<comment type="subunit">
    <text evidence="6">Interacts with MYBS1.</text>
</comment>
<comment type="subcellular location">
    <subcellularLocation>
        <location evidence="9">Nucleus</location>
    </subcellularLocation>
</comment>
<comment type="alternative products">
    <event type="alternative splicing"/>
    <isoform>
        <id>Q0JIC2-1</id>
        <id>P93417-1</id>
        <name>1</name>
        <sequence type="displayed"/>
    </isoform>
    <isoform>
        <id>Q0JIC2-2</id>
        <id>P93417-2</id>
        <name>2</name>
        <sequence type="described" ref="VSP_015390 VSP_015391"/>
    </isoform>
</comment>
<comment type="tissue specificity">
    <text evidence="3">Expressed in aleurone cells, inflorescence shoot apical region, stamen primordia, and tapetum cells of the anther. Expressed at low level in roots and vegetative shoots.</text>
</comment>
<comment type="developmental stage">
    <text evidence="3 4">Expressed in the epithelial layer of the embryo in germinating seed (PubMed:14688295). Expressed in anthers of developing flowers during meiosis, tapetal cell death stage, young microspore stage and vacuolated pollen stage (PubMed:19454733).</text>
</comment>
<comment type="induction">
    <text evidence="3">By gibberellin in aleurone cells.</text>
</comment>
<comment type="disruption phenotype">
    <text evidence="3 4 5">Plants are not defective in root and leaf elongation, but present shortened internodes and defects in pollen and floral development (PubMed:14688295). Delayed flowering (PubMed:19454733). Male sterile. Defective in anther and pollen development (PubMed:19454733, PubMed:20590996).</text>
</comment>
<comment type="miscellaneous">
    <molecule>Isoform 2</molecule>
    <text evidence="9">May be due to intron retention.</text>
</comment>
<name>GAMYB_ORYSJ</name>
<proteinExistence type="evidence at protein level"/>
<keyword id="KW-0010">Activator</keyword>
<keyword id="KW-0025">Alternative splicing</keyword>
<keyword id="KW-0217">Developmental protein</keyword>
<keyword id="KW-0221">Differentiation</keyword>
<keyword id="KW-0238">DNA-binding</keyword>
<keyword id="KW-0287">Flowering</keyword>
<keyword id="KW-0539">Nucleus</keyword>
<keyword id="KW-1185">Reference proteome</keyword>
<keyword id="KW-0677">Repeat</keyword>
<keyword id="KW-0804">Transcription</keyword>
<keyword id="KW-0805">Transcription regulation</keyword>
<feature type="chain" id="PRO_0000197079" description="Transcription factor GAMYB">
    <location>
        <begin position="1"/>
        <end position="553"/>
    </location>
</feature>
<feature type="domain" description="HTH myb-type 1" evidence="1">
    <location>
        <begin position="37"/>
        <end position="89"/>
    </location>
</feature>
<feature type="domain" description="HTH myb-type 2" evidence="1">
    <location>
        <begin position="90"/>
        <end position="144"/>
    </location>
</feature>
<feature type="DNA-binding region" description="H-T-H motif" evidence="1">
    <location>
        <begin position="65"/>
        <end position="89"/>
    </location>
</feature>
<feature type="DNA-binding region" description="H-T-H motif" evidence="1">
    <location>
        <begin position="117"/>
        <end position="140"/>
    </location>
</feature>
<feature type="region of interest" description="Disordered" evidence="2">
    <location>
        <begin position="1"/>
        <end position="45"/>
    </location>
</feature>
<feature type="region of interest" description="Disordered" evidence="2">
    <location>
        <begin position="464"/>
        <end position="489"/>
    </location>
</feature>
<feature type="compositionally biased region" description="Basic and acidic residues" evidence="2">
    <location>
        <begin position="1"/>
        <end position="17"/>
    </location>
</feature>
<feature type="compositionally biased region" description="Gly residues" evidence="2">
    <location>
        <begin position="27"/>
        <end position="38"/>
    </location>
</feature>
<feature type="splice variant" id="VSP_015390" description="In isoform 2." evidence="7">
    <original>AQSTSMGSGE</original>
    <variation>GWTLKFLIPL</variation>
    <location>
        <begin position="465"/>
        <end position="474"/>
    </location>
</feature>
<feature type="splice variant" id="VSP_015391" description="In isoform 2." evidence="7">
    <location>
        <begin position="475"/>
        <end position="553"/>
    </location>
</feature>
<evidence type="ECO:0000255" key="1">
    <source>
        <dbReference type="PROSITE-ProRule" id="PRU00625"/>
    </source>
</evidence>
<evidence type="ECO:0000256" key="2">
    <source>
        <dbReference type="SAM" id="MobiDB-lite"/>
    </source>
</evidence>
<evidence type="ECO:0000269" key="3">
    <source>
    </source>
</evidence>
<evidence type="ECO:0000269" key="4">
    <source>
    </source>
</evidence>
<evidence type="ECO:0000269" key="5">
    <source>
    </source>
</evidence>
<evidence type="ECO:0000269" key="6">
    <source>
    </source>
</evidence>
<evidence type="ECO:0000303" key="7">
    <source>
    </source>
</evidence>
<evidence type="ECO:0000303" key="8">
    <source>
    </source>
</evidence>
<evidence type="ECO:0000305" key="9"/>
<organism>
    <name type="scientific">Oryza sativa subsp. japonica</name>
    <name type="common">Rice</name>
    <dbReference type="NCBI Taxonomy" id="39947"/>
    <lineage>
        <taxon>Eukaryota</taxon>
        <taxon>Viridiplantae</taxon>
        <taxon>Streptophyta</taxon>
        <taxon>Embryophyta</taxon>
        <taxon>Tracheophyta</taxon>
        <taxon>Spermatophyta</taxon>
        <taxon>Magnoliopsida</taxon>
        <taxon>Liliopsida</taxon>
        <taxon>Poales</taxon>
        <taxon>Poaceae</taxon>
        <taxon>BOP clade</taxon>
        <taxon>Oryzoideae</taxon>
        <taxon>Oryzeae</taxon>
        <taxon>Oryzinae</taxon>
        <taxon>Oryza</taxon>
        <taxon>Oryza sativa</taxon>
    </lineage>
</organism>
<reference key="1">
    <citation type="journal article" date="2002" name="Nature">
        <title>The genome sequence and structure of rice chromosome 1.</title>
        <authorList>
            <person name="Sasaki T."/>
            <person name="Matsumoto T."/>
            <person name="Yamamoto K."/>
            <person name="Sakata K."/>
            <person name="Baba T."/>
            <person name="Katayose Y."/>
            <person name="Wu J."/>
            <person name="Niimura Y."/>
            <person name="Cheng Z."/>
            <person name="Nagamura Y."/>
            <person name="Antonio B.A."/>
            <person name="Kanamori H."/>
            <person name="Hosokawa S."/>
            <person name="Masukawa M."/>
            <person name="Arikawa K."/>
            <person name="Chiden Y."/>
            <person name="Hayashi M."/>
            <person name="Okamoto M."/>
            <person name="Ando T."/>
            <person name="Aoki H."/>
            <person name="Arita K."/>
            <person name="Hamada M."/>
            <person name="Harada C."/>
            <person name="Hijishita S."/>
            <person name="Honda M."/>
            <person name="Ichikawa Y."/>
            <person name="Idonuma A."/>
            <person name="Iijima M."/>
            <person name="Ikeda M."/>
            <person name="Ikeno M."/>
            <person name="Ito S."/>
            <person name="Ito T."/>
            <person name="Ito Y."/>
            <person name="Ito Y."/>
            <person name="Iwabuchi A."/>
            <person name="Kamiya K."/>
            <person name="Karasawa W."/>
            <person name="Katagiri S."/>
            <person name="Kikuta A."/>
            <person name="Kobayashi N."/>
            <person name="Kono I."/>
            <person name="Machita K."/>
            <person name="Maehara T."/>
            <person name="Mizuno H."/>
            <person name="Mizubayashi T."/>
            <person name="Mukai Y."/>
            <person name="Nagasaki H."/>
            <person name="Nakashima M."/>
            <person name="Nakama Y."/>
            <person name="Nakamichi Y."/>
            <person name="Nakamura M."/>
            <person name="Namiki N."/>
            <person name="Negishi M."/>
            <person name="Ohta I."/>
            <person name="Ono N."/>
            <person name="Saji S."/>
            <person name="Sakai K."/>
            <person name="Shibata M."/>
            <person name="Shimokawa T."/>
            <person name="Shomura A."/>
            <person name="Song J."/>
            <person name="Takazaki Y."/>
            <person name="Terasawa K."/>
            <person name="Tsuji K."/>
            <person name="Waki K."/>
            <person name="Yamagata H."/>
            <person name="Yamane H."/>
            <person name="Yoshiki S."/>
            <person name="Yoshihara R."/>
            <person name="Yukawa K."/>
            <person name="Zhong H."/>
            <person name="Iwama H."/>
            <person name="Endo T."/>
            <person name="Ito H."/>
            <person name="Hahn J.H."/>
            <person name="Kim H.-I."/>
            <person name="Eun M.-Y."/>
            <person name="Yano M."/>
            <person name="Jiang J."/>
            <person name="Gojobori T."/>
        </authorList>
    </citation>
    <scope>NUCLEOTIDE SEQUENCE [LARGE SCALE GENOMIC DNA]</scope>
    <source>
        <strain>cv. Nipponbare</strain>
    </source>
</reference>
<reference key="2">
    <citation type="journal article" date="2005" name="Nature">
        <title>The map-based sequence of the rice genome.</title>
        <authorList>
            <consortium name="International rice genome sequencing project (IRGSP)"/>
        </authorList>
    </citation>
    <scope>NUCLEOTIDE SEQUENCE [LARGE SCALE GENOMIC DNA]</scope>
    <source>
        <strain>cv. Nipponbare</strain>
    </source>
</reference>
<reference key="3">
    <citation type="journal article" date="2008" name="Nucleic Acids Res.">
        <title>The rice annotation project database (RAP-DB): 2008 update.</title>
        <authorList>
            <consortium name="The rice annotation project (RAP)"/>
        </authorList>
    </citation>
    <scope>GENOME REANNOTATION</scope>
    <source>
        <strain>cv. Nipponbare</strain>
    </source>
</reference>
<reference key="4">
    <citation type="journal article" date="2013" name="Rice">
        <title>Improvement of the Oryza sativa Nipponbare reference genome using next generation sequence and optical map data.</title>
        <authorList>
            <person name="Kawahara Y."/>
            <person name="de la Bastide M."/>
            <person name="Hamilton J.P."/>
            <person name="Kanamori H."/>
            <person name="McCombie W.R."/>
            <person name="Ouyang S."/>
            <person name="Schwartz D.C."/>
            <person name="Tanaka T."/>
            <person name="Wu J."/>
            <person name="Zhou S."/>
            <person name="Childs K.L."/>
            <person name="Davidson R.M."/>
            <person name="Lin H."/>
            <person name="Quesada-Ocampo L."/>
            <person name="Vaillancourt B."/>
            <person name="Sakai H."/>
            <person name="Lee S.S."/>
            <person name="Kim J."/>
            <person name="Numa H."/>
            <person name="Itoh T."/>
            <person name="Buell C.R."/>
            <person name="Matsumoto T."/>
        </authorList>
    </citation>
    <scope>GENOME REANNOTATION</scope>
    <source>
        <strain>cv. Nipponbare</strain>
    </source>
</reference>
<reference key="5">
    <citation type="journal article" date="2005" name="PLoS Biol.">
        <title>The genomes of Oryza sativa: a history of duplications.</title>
        <authorList>
            <person name="Yu J."/>
            <person name="Wang J."/>
            <person name="Lin W."/>
            <person name="Li S."/>
            <person name="Li H."/>
            <person name="Zhou J."/>
            <person name="Ni P."/>
            <person name="Dong W."/>
            <person name="Hu S."/>
            <person name="Zeng C."/>
            <person name="Zhang J."/>
            <person name="Zhang Y."/>
            <person name="Li R."/>
            <person name="Xu Z."/>
            <person name="Li S."/>
            <person name="Li X."/>
            <person name="Zheng H."/>
            <person name="Cong L."/>
            <person name="Lin L."/>
            <person name="Yin J."/>
            <person name="Geng J."/>
            <person name="Li G."/>
            <person name="Shi J."/>
            <person name="Liu J."/>
            <person name="Lv H."/>
            <person name="Li J."/>
            <person name="Wang J."/>
            <person name="Deng Y."/>
            <person name="Ran L."/>
            <person name="Shi X."/>
            <person name="Wang X."/>
            <person name="Wu Q."/>
            <person name="Li C."/>
            <person name="Ren X."/>
            <person name="Wang J."/>
            <person name="Wang X."/>
            <person name="Li D."/>
            <person name="Liu D."/>
            <person name="Zhang X."/>
            <person name="Ji Z."/>
            <person name="Zhao W."/>
            <person name="Sun Y."/>
            <person name="Zhang Z."/>
            <person name="Bao J."/>
            <person name="Han Y."/>
            <person name="Dong L."/>
            <person name="Ji J."/>
            <person name="Chen P."/>
            <person name="Wu S."/>
            <person name="Liu J."/>
            <person name="Xiao Y."/>
            <person name="Bu D."/>
            <person name="Tan J."/>
            <person name="Yang L."/>
            <person name="Ye C."/>
            <person name="Zhang J."/>
            <person name="Xu J."/>
            <person name="Zhou Y."/>
            <person name="Yu Y."/>
            <person name="Zhang B."/>
            <person name="Zhuang S."/>
            <person name="Wei H."/>
            <person name="Liu B."/>
            <person name="Lei M."/>
            <person name="Yu H."/>
            <person name="Li Y."/>
            <person name="Xu H."/>
            <person name="Wei S."/>
            <person name="He X."/>
            <person name="Fang L."/>
            <person name="Zhang Z."/>
            <person name="Zhang Y."/>
            <person name="Huang X."/>
            <person name="Su Z."/>
            <person name="Tong W."/>
            <person name="Li J."/>
            <person name="Tong Z."/>
            <person name="Li S."/>
            <person name="Ye J."/>
            <person name="Wang L."/>
            <person name="Fang L."/>
            <person name="Lei T."/>
            <person name="Chen C.-S."/>
            <person name="Chen H.-C."/>
            <person name="Xu Z."/>
            <person name="Li H."/>
            <person name="Huang H."/>
            <person name="Zhang F."/>
            <person name="Xu H."/>
            <person name="Li N."/>
            <person name="Zhao C."/>
            <person name="Li S."/>
            <person name="Dong L."/>
            <person name="Huang Y."/>
            <person name="Li L."/>
            <person name="Xi Y."/>
            <person name="Qi Q."/>
            <person name="Li W."/>
            <person name="Zhang B."/>
            <person name="Hu W."/>
            <person name="Zhang Y."/>
            <person name="Tian X."/>
            <person name="Jiao Y."/>
            <person name="Liang X."/>
            <person name="Jin J."/>
            <person name="Gao L."/>
            <person name="Zheng W."/>
            <person name="Hao B."/>
            <person name="Liu S.-M."/>
            <person name="Wang W."/>
            <person name="Yuan L."/>
            <person name="Cao M."/>
            <person name="McDermott J."/>
            <person name="Samudrala R."/>
            <person name="Wang J."/>
            <person name="Wong G.K.-S."/>
            <person name="Yang H."/>
        </authorList>
    </citation>
    <scope>NUCLEOTIDE SEQUENCE [LARGE SCALE GENOMIC DNA]</scope>
    <source>
        <strain>cv. Nipponbare</strain>
    </source>
</reference>
<reference key="6">
    <citation type="journal article" date="2003" name="Science">
        <title>Collection, mapping, and annotation of over 28,000 cDNA clones from japonica rice.</title>
        <authorList>
            <consortium name="The rice full-length cDNA consortium"/>
        </authorList>
    </citation>
    <scope>NUCLEOTIDE SEQUENCE [LARGE SCALE MRNA] (ISOFORMS 1 AND 2)</scope>
    <source>
        <strain>cv. Nipponbare</strain>
    </source>
</reference>
<reference key="7">
    <citation type="journal article" date="2004" name="Plant Cell">
        <title>Loss-of-function mutations of the rice GAMYB gene impair alpha-amylase expression in aleurone and flower development.</title>
        <authorList>
            <person name="Kaneko M."/>
            <person name="Inukai Y."/>
            <person name="Ueguchi-Tanaka M."/>
            <person name="Itoh H."/>
            <person name="Izawa T."/>
            <person name="Kobayashi Y."/>
            <person name="Hattori T."/>
            <person name="Miyao A."/>
            <person name="Hirochika H."/>
            <person name="Ashikari M."/>
            <person name="Matsuoka M."/>
        </authorList>
    </citation>
    <scope>FUNCTION</scope>
    <scope>DISRUPTION PHENOTYPE</scope>
    <scope>TISSUE SPECIFICITY</scope>
    <scope>DEVELOPMENTAL STAGE</scope>
    <scope>INDUCTION</scope>
</reference>
<reference key="8">
    <citation type="journal article" date="2009" name="Plant Cell">
        <title>Gibberellin modulates anther development in rice via the transcriptional regulation of GAMYB.</title>
        <authorList>
            <person name="Aya K."/>
            <person name="Ueguchi-Tanaka M."/>
            <person name="Kondo M."/>
            <person name="Hamada K."/>
            <person name="Yano K."/>
            <person name="Nishimura M."/>
            <person name="Matsuoka M."/>
        </authorList>
    </citation>
    <scope>FUNCTION</scope>
    <scope>DEVELOPMENTAL STAGE</scope>
    <scope>DISRUPTION PHENOTYPE</scope>
</reference>
<reference key="9">
    <citation type="journal article" date="2010" name="J. Integr. Plant Biol.">
        <title>Identification of gamyb-4 and analysis of the regulatory role of GAMYB in rice anther development.</title>
        <authorList>
            <person name="Liu Z."/>
            <person name="Bao W."/>
            <person name="Liang W."/>
            <person name="Yin J."/>
            <person name="Zhang D."/>
        </authorList>
    </citation>
    <scope>FUNCTION</scope>
    <scope>DISRUPTION PHENOTYPE</scope>
</reference>
<reference key="10">
    <citation type="journal article" date="2012" name="Plant Cell">
        <title>Convergent starvation signals and hormone crosstalk in regulating nutrient mobilization upon germination in cereals.</title>
        <authorList>
            <person name="Hong Y.F."/>
            <person name="Ho T.H."/>
            <person name="Wu C.F."/>
            <person name="Ho S.L."/>
            <person name="Yeh R.H."/>
            <person name="Lu C.A."/>
            <person name="Chen P.W."/>
            <person name="Yu L.C."/>
            <person name="Chao A."/>
            <person name="Yu S.M."/>
        </authorList>
    </citation>
    <scope>FUNCTION</scope>
    <scope>INTERACTION WITH MYBS1</scope>
</reference>
<gene>
    <name evidence="8" type="primary">GAMYB</name>
    <name type="synonym">GAM1</name>
    <name evidence="9" type="synonym">MYBGA</name>
    <name type="ordered locus">Os01g0812000</name>
    <name type="ordered locus">LOC_Os01g59660</name>
    <name type="ORF">OsJ_003732</name>
    <name type="ORF">P0425G02.18-1</name>
    <name type="ORF">P0425G02.18-2</name>
</gene>
<accession>Q0JIC2</accession>
<accession>B7ETP5</accession>
<accession>P93417</accession>
<accession>Q5VQR2</accession>
<accession>Q8SA38</accession>